<accession>Q9HWC4</accession>
<protein>
    <recommendedName>
        <fullName evidence="1">Transcription termination/antitermination protein NusG</fullName>
    </recommendedName>
</protein>
<sequence length="177" mass="20162">MAKRWYVVHAYSGYEKHVMRSLIERVKLAGMEEEFGEILVPTEEVVEMRNGQKRKSERKFFPGYVLVQMEMNEGTWHLVKDTPRVMGFIGGTADKPAPITDREADAILRRVADSGDKPKPKTLFEPGETVRVIDGPFADFNGVVEEVNYEKSRIQVAVLIFGRSTPVELEFSQVEKV</sequence>
<dbReference type="EMBL" id="AE004091">
    <property type="protein sequence ID" value="AAG07663.1"/>
    <property type="molecule type" value="Genomic_DNA"/>
</dbReference>
<dbReference type="PIR" id="D83111">
    <property type="entry name" value="D83111"/>
</dbReference>
<dbReference type="RefSeq" id="NP_252965.1">
    <property type="nucleotide sequence ID" value="NC_002516.2"/>
</dbReference>
<dbReference type="RefSeq" id="WP_003108028.1">
    <property type="nucleotide sequence ID" value="NZ_QZGE01000028.1"/>
</dbReference>
<dbReference type="SMR" id="Q9HWC4"/>
<dbReference type="FunCoup" id="Q9HWC4">
    <property type="interactions" value="611"/>
</dbReference>
<dbReference type="STRING" id="208964.PA4275"/>
<dbReference type="PaxDb" id="208964-PA4275"/>
<dbReference type="GeneID" id="77219186"/>
<dbReference type="GeneID" id="881693"/>
<dbReference type="KEGG" id="pae:PA4275"/>
<dbReference type="PATRIC" id="fig|208964.12.peg.4476"/>
<dbReference type="PseudoCAP" id="PA4275"/>
<dbReference type="HOGENOM" id="CLU_067287_1_0_6"/>
<dbReference type="InParanoid" id="Q9HWC4"/>
<dbReference type="OrthoDB" id="9809075at2"/>
<dbReference type="PhylomeDB" id="Q9HWC4"/>
<dbReference type="BioCyc" id="PAER208964:G1FZ6-4350-MONOMER"/>
<dbReference type="Proteomes" id="UP000002438">
    <property type="component" value="Chromosome"/>
</dbReference>
<dbReference type="GO" id="GO:0005829">
    <property type="term" value="C:cytosol"/>
    <property type="evidence" value="ECO:0000318"/>
    <property type="project" value="GO_Central"/>
</dbReference>
<dbReference type="GO" id="GO:0006353">
    <property type="term" value="P:DNA-templated transcription termination"/>
    <property type="evidence" value="ECO:0007669"/>
    <property type="project" value="UniProtKB-UniRule"/>
</dbReference>
<dbReference type="GO" id="GO:0032784">
    <property type="term" value="P:regulation of DNA-templated transcription elongation"/>
    <property type="evidence" value="ECO:0007669"/>
    <property type="project" value="InterPro"/>
</dbReference>
<dbReference type="GO" id="GO:0031564">
    <property type="term" value="P:transcription antitermination"/>
    <property type="evidence" value="ECO:0007669"/>
    <property type="project" value="UniProtKB-UniRule"/>
</dbReference>
<dbReference type="GO" id="GO:0140673">
    <property type="term" value="P:transcription elongation-coupled chromatin remodeling"/>
    <property type="evidence" value="ECO:0007669"/>
    <property type="project" value="InterPro"/>
</dbReference>
<dbReference type="CDD" id="cd06091">
    <property type="entry name" value="KOW_NusG"/>
    <property type="match status" value="1"/>
</dbReference>
<dbReference type="CDD" id="cd09891">
    <property type="entry name" value="NGN_Bact_1"/>
    <property type="match status" value="1"/>
</dbReference>
<dbReference type="FunFam" id="2.30.30.30:FF:000002">
    <property type="entry name" value="Transcription termination/antitermination factor NusG"/>
    <property type="match status" value="1"/>
</dbReference>
<dbReference type="FunFam" id="3.30.70.940:FF:000001">
    <property type="entry name" value="Transcription termination/antitermination protein NusG"/>
    <property type="match status" value="1"/>
</dbReference>
<dbReference type="Gene3D" id="2.30.30.30">
    <property type="match status" value="1"/>
</dbReference>
<dbReference type="Gene3D" id="3.30.70.940">
    <property type="entry name" value="NusG, N-terminal domain"/>
    <property type="match status" value="1"/>
</dbReference>
<dbReference type="HAMAP" id="MF_00948">
    <property type="entry name" value="NusG"/>
    <property type="match status" value="1"/>
</dbReference>
<dbReference type="InterPro" id="IPR005824">
    <property type="entry name" value="KOW"/>
</dbReference>
<dbReference type="InterPro" id="IPR047050">
    <property type="entry name" value="NGN"/>
</dbReference>
<dbReference type="InterPro" id="IPR006645">
    <property type="entry name" value="NGN-like_dom"/>
</dbReference>
<dbReference type="InterPro" id="IPR036735">
    <property type="entry name" value="NGN_dom_sf"/>
</dbReference>
<dbReference type="InterPro" id="IPR043425">
    <property type="entry name" value="NusG-like"/>
</dbReference>
<dbReference type="InterPro" id="IPR014722">
    <property type="entry name" value="Rib_uL2_dom2"/>
</dbReference>
<dbReference type="InterPro" id="IPR001062">
    <property type="entry name" value="Transcrpt_antiterm_NusG"/>
</dbReference>
<dbReference type="InterPro" id="IPR015869">
    <property type="entry name" value="Transcrpt_antiterm_NusG_bac_CS"/>
</dbReference>
<dbReference type="InterPro" id="IPR008991">
    <property type="entry name" value="Translation_prot_SH3-like_sf"/>
</dbReference>
<dbReference type="NCBIfam" id="TIGR00922">
    <property type="entry name" value="nusG"/>
    <property type="match status" value="1"/>
</dbReference>
<dbReference type="PANTHER" id="PTHR30265">
    <property type="entry name" value="RHO-INTERACTING TRANSCRIPTION TERMINATION FACTOR NUSG"/>
    <property type="match status" value="1"/>
</dbReference>
<dbReference type="PANTHER" id="PTHR30265:SF2">
    <property type="entry name" value="TRANSCRIPTION TERMINATION_ANTITERMINATION PROTEIN NUSG"/>
    <property type="match status" value="1"/>
</dbReference>
<dbReference type="Pfam" id="PF00467">
    <property type="entry name" value="KOW"/>
    <property type="match status" value="1"/>
</dbReference>
<dbReference type="Pfam" id="PF02357">
    <property type="entry name" value="NusG"/>
    <property type="match status" value="1"/>
</dbReference>
<dbReference type="PRINTS" id="PR00338">
    <property type="entry name" value="NUSGTNSCPFCT"/>
</dbReference>
<dbReference type="SMART" id="SM00739">
    <property type="entry name" value="KOW"/>
    <property type="match status" value="1"/>
</dbReference>
<dbReference type="SMART" id="SM00738">
    <property type="entry name" value="NGN"/>
    <property type="match status" value="1"/>
</dbReference>
<dbReference type="SUPFAM" id="SSF82679">
    <property type="entry name" value="N-utilization substance G protein NusG, N-terminal domain"/>
    <property type="match status" value="1"/>
</dbReference>
<dbReference type="SUPFAM" id="SSF50104">
    <property type="entry name" value="Translation proteins SH3-like domain"/>
    <property type="match status" value="1"/>
</dbReference>
<dbReference type="PROSITE" id="PS01014">
    <property type="entry name" value="NUSG"/>
    <property type="match status" value="1"/>
</dbReference>
<proteinExistence type="inferred from homology"/>
<comment type="function">
    <text evidence="1">Participates in transcription elongation, termination and antitermination.</text>
</comment>
<comment type="similarity">
    <text evidence="1">Belongs to the NusG family.</text>
</comment>
<keyword id="KW-1185">Reference proteome</keyword>
<keyword id="KW-0804">Transcription</keyword>
<keyword id="KW-0889">Transcription antitermination</keyword>
<keyword id="KW-0805">Transcription regulation</keyword>
<keyword id="KW-0806">Transcription termination</keyword>
<name>NUSG_PSEAE</name>
<gene>
    <name evidence="1" type="primary">nusG</name>
    <name type="ordered locus">PA4275</name>
</gene>
<organism>
    <name type="scientific">Pseudomonas aeruginosa (strain ATCC 15692 / DSM 22644 / CIP 104116 / JCM 14847 / LMG 12228 / 1C / PRS 101 / PAO1)</name>
    <dbReference type="NCBI Taxonomy" id="208964"/>
    <lineage>
        <taxon>Bacteria</taxon>
        <taxon>Pseudomonadati</taxon>
        <taxon>Pseudomonadota</taxon>
        <taxon>Gammaproteobacteria</taxon>
        <taxon>Pseudomonadales</taxon>
        <taxon>Pseudomonadaceae</taxon>
        <taxon>Pseudomonas</taxon>
    </lineage>
</organism>
<evidence type="ECO:0000255" key="1">
    <source>
        <dbReference type="HAMAP-Rule" id="MF_00948"/>
    </source>
</evidence>
<feature type="chain" id="PRO_0000113940" description="Transcription termination/antitermination protein NusG">
    <location>
        <begin position="1"/>
        <end position="177"/>
    </location>
</feature>
<feature type="domain" description="KOW" evidence="1">
    <location>
        <begin position="126"/>
        <end position="156"/>
    </location>
</feature>
<reference key="1">
    <citation type="journal article" date="2000" name="Nature">
        <title>Complete genome sequence of Pseudomonas aeruginosa PAO1, an opportunistic pathogen.</title>
        <authorList>
            <person name="Stover C.K."/>
            <person name="Pham X.-Q.T."/>
            <person name="Erwin A.L."/>
            <person name="Mizoguchi S.D."/>
            <person name="Warrener P."/>
            <person name="Hickey M.J."/>
            <person name="Brinkman F.S.L."/>
            <person name="Hufnagle W.O."/>
            <person name="Kowalik D.J."/>
            <person name="Lagrou M."/>
            <person name="Garber R.L."/>
            <person name="Goltry L."/>
            <person name="Tolentino E."/>
            <person name="Westbrock-Wadman S."/>
            <person name="Yuan Y."/>
            <person name="Brody L.L."/>
            <person name="Coulter S.N."/>
            <person name="Folger K.R."/>
            <person name="Kas A."/>
            <person name="Larbig K."/>
            <person name="Lim R.M."/>
            <person name="Smith K.A."/>
            <person name="Spencer D.H."/>
            <person name="Wong G.K.-S."/>
            <person name="Wu Z."/>
            <person name="Paulsen I.T."/>
            <person name="Reizer J."/>
            <person name="Saier M.H. Jr."/>
            <person name="Hancock R.E.W."/>
            <person name="Lory S."/>
            <person name="Olson M.V."/>
        </authorList>
    </citation>
    <scope>NUCLEOTIDE SEQUENCE [LARGE SCALE GENOMIC DNA]</scope>
    <source>
        <strain>ATCC 15692 / DSM 22644 / CIP 104116 / JCM 14847 / LMG 12228 / 1C / PRS 101 / PAO1</strain>
    </source>
</reference>